<name>FOLD_BURP1</name>
<protein>
    <recommendedName>
        <fullName evidence="1">Bifunctional protein FolD</fullName>
    </recommendedName>
    <domain>
        <recommendedName>
            <fullName evidence="1">Methylenetetrahydrofolate dehydrogenase</fullName>
            <ecNumber evidence="1">1.5.1.5</ecNumber>
        </recommendedName>
    </domain>
    <domain>
        <recommendedName>
            <fullName evidence="1">Methenyltetrahydrofolate cyclohydrolase</fullName>
            <ecNumber evidence="1">3.5.4.9</ecNumber>
        </recommendedName>
    </domain>
</protein>
<dbReference type="EC" id="1.5.1.5" evidence="1"/>
<dbReference type="EC" id="3.5.4.9" evidence="1"/>
<dbReference type="EMBL" id="CP000124">
    <property type="protein sequence ID" value="ABA49993.1"/>
    <property type="status" value="ALT_INIT"/>
    <property type="molecule type" value="Genomic_DNA"/>
</dbReference>
<dbReference type="RefSeq" id="WP_004524717.1">
    <property type="nucleotide sequence ID" value="NC_007434.1"/>
</dbReference>
<dbReference type="SMR" id="Q3JQL8"/>
<dbReference type="EnsemblBacteria" id="ABA49993">
    <property type="protein sequence ID" value="ABA49993"/>
    <property type="gene ID" value="BURPS1710b_2749"/>
</dbReference>
<dbReference type="KEGG" id="bpm:BURPS1710b_2749"/>
<dbReference type="HOGENOM" id="CLU_034045_2_1_4"/>
<dbReference type="UniPathway" id="UPA00193"/>
<dbReference type="Proteomes" id="UP000002700">
    <property type="component" value="Chromosome I"/>
</dbReference>
<dbReference type="GO" id="GO:0005829">
    <property type="term" value="C:cytosol"/>
    <property type="evidence" value="ECO:0007669"/>
    <property type="project" value="TreeGrafter"/>
</dbReference>
<dbReference type="GO" id="GO:0004477">
    <property type="term" value="F:methenyltetrahydrofolate cyclohydrolase activity"/>
    <property type="evidence" value="ECO:0007669"/>
    <property type="project" value="UniProtKB-UniRule"/>
</dbReference>
<dbReference type="GO" id="GO:0004488">
    <property type="term" value="F:methylenetetrahydrofolate dehydrogenase (NADP+) activity"/>
    <property type="evidence" value="ECO:0007669"/>
    <property type="project" value="UniProtKB-UniRule"/>
</dbReference>
<dbReference type="GO" id="GO:0000105">
    <property type="term" value="P:L-histidine biosynthetic process"/>
    <property type="evidence" value="ECO:0007669"/>
    <property type="project" value="UniProtKB-KW"/>
</dbReference>
<dbReference type="GO" id="GO:0009086">
    <property type="term" value="P:methionine biosynthetic process"/>
    <property type="evidence" value="ECO:0007669"/>
    <property type="project" value="UniProtKB-KW"/>
</dbReference>
<dbReference type="GO" id="GO:0006164">
    <property type="term" value="P:purine nucleotide biosynthetic process"/>
    <property type="evidence" value="ECO:0007669"/>
    <property type="project" value="UniProtKB-KW"/>
</dbReference>
<dbReference type="GO" id="GO:0035999">
    <property type="term" value="P:tetrahydrofolate interconversion"/>
    <property type="evidence" value="ECO:0007669"/>
    <property type="project" value="UniProtKB-UniRule"/>
</dbReference>
<dbReference type="CDD" id="cd01080">
    <property type="entry name" value="NAD_bind_m-THF_DH_Cyclohyd"/>
    <property type="match status" value="1"/>
</dbReference>
<dbReference type="FunFam" id="3.40.50.720:FF:000094">
    <property type="entry name" value="Bifunctional protein FolD"/>
    <property type="match status" value="1"/>
</dbReference>
<dbReference type="FunFam" id="3.40.50.10860:FF:000005">
    <property type="entry name" value="C-1-tetrahydrofolate synthase, cytoplasmic, putative"/>
    <property type="match status" value="1"/>
</dbReference>
<dbReference type="Gene3D" id="3.40.50.10860">
    <property type="entry name" value="Leucine Dehydrogenase, chain A, domain 1"/>
    <property type="match status" value="1"/>
</dbReference>
<dbReference type="Gene3D" id="3.40.50.720">
    <property type="entry name" value="NAD(P)-binding Rossmann-like Domain"/>
    <property type="match status" value="1"/>
</dbReference>
<dbReference type="HAMAP" id="MF_01576">
    <property type="entry name" value="THF_DHG_CYH"/>
    <property type="match status" value="1"/>
</dbReference>
<dbReference type="InterPro" id="IPR046346">
    <property type="entry name" value="Aminoacid_DH-like_N_sf"/>
</dbReference>
<dbReference type="InterPro" id="IPR036291">
    <property type="entry name" value="NAD(P)-bd_dom_sf"/>
</dbReference>
<dbReference type="InterPro" id="IPR000672">
    <property type="entry name" value="THF_DH/CycHdrlase"/>
</dbReference>
<dbReference type="InterPro" id="IPR020630">
    <property type="entry name" value="THF_DH/CycHdrlase_cat_dom"/>
</dbReference>
<dbReference type="InterPro" id="IPR020867">
    <property type="entry name" value="THF_DH/CycHdrlase_CS"/>
</dbReference>
<dbReference type="InterPro" id="IPR020631">
    <property type="entry name" value="THF_DH/CycHdrlase_NAD-bd_dom"/>
</dbReference>
<dbReference type="NCBIfam" id="NF008058">
    <property type="entry name" value="PRK10792.1"/>
    <property type="match status" value="1"/>
</dbReference>
<dbReference type="NCBIfam" id="NF010783">
    <property type="entry name" value="PRK14186.1"/>
    <property type="match status" value="1"/>
</dbReference>
<dbReference type="NCBIfam" id="NF010786">
    <property type="entry name" value="PRK14189.1"/>
    <property type="match status" value="1"/>
</dbReference>
<dbReference type="PANTHER" id="PTHR48099:SF5">
    <property type="entry name" value="C-1-TETRAHYDROFOLATE SYNTHASE, CYTOPLASMIC"/>
    <property type="match status" value="1"/>
</dbReference>
<dbReference type="PANTHER" id="PTHR48099">
    <property type="entry name" value="C-1-TETRAHYDROFOLATE SYNTHASE, CYTOPLASMIC-RELATED"/>
    <property type="match status" value="1"/>
</dbReference>
<dbReference type="Pfam" id="PF00763">
    <property type="entry name" value="THF_DHG_CYH"/>
    <property type="match status" value="1"/>
</dbReference>
<dbReference type="Pfam" id="PF02882">
    <property type="entry name" value="THF_DHG_CYH_C"/>
    <property type="match status" value="1"/>
</dbReference>
<dbReference type="PRINTS" id="PR00085">
    <property type="entry name" value="THFDHDRGNASE"/>
</dbReference>
<dbReference type="SUPFAM" id="SSF53223">
    <property type="entry name" value="Aminoacid dehydrogenase-like, N-terminal domain"/>
    <property type="match status" value="1"/>
</dbReference>
<dbReference type="SUPFAM" id="SSF51735">
    <property type="entry name" value="NAD(P)-binding Rossmann-fold domains"/>
    <property type="match status" value="1"/>
</dbReference>
<dbReference type="PROSITE" id="PS00766">
    <property type="entry name" value="THF_DHG_CYH_1"/>
    <property type="match status" value="1"/>
</dbReference>
<dbReference type="PROSITE" id="PS00767">
    <property type="entry name" value="THF_DHG_CYH_2"/>
    <property type="match status" value="1"/>
</dbReference>
<proteinExistence type="inferred from homology"/>
<keyword id="KW-0028">Amino-acid biosynthesis</keyword>
<keyword id="KW-0368">Histidine biosynthesis</keyword>
<keyword id="KW-0378">Hydrolase</keyword>
<keyword id="KW-0486">Methionine biosynthesis</keyword>
<keyword id="KW-0511">Multifunctional enzyme</keyword>
<keyword id="KW-0521">NADP</keyword>
<keyword id="KW-0554">One-carbon metabolism</keyword>
<keyword id="KW-0560">Oxidoreductase</keyword>
<keyword id="KW-0658">Purine biosynthesis</keyword>
<gene>
    <name evidence="1" type="primary">folD</name>
    <name type="ordered locus">BURPS1710b_2749</name>
</gene>
<sequence length="285" mass="29926">MTATLIDGNALSKTLRAQAAERAAALAARGHRPGLAVILVGDNPASEVYVRNKIKACEDNGFFSLKDRYPATLSEPELLARIDELNRDPKIHGILVQLPLPAHIDSHKVIEAIAPEKDVDGFHVANAGALLTGKPLFRPCTPYGVMKMFEAYKIPLQGANAVVIGRSNIVGKPMALLLLEAGATVTICHSKTRELAAHTRAADIVVAAVGKRNVLTADMVKPGATVIDVGMNRNDEGKLCGDVDFAGVSQVAGHITPVPGGVGPMTITMLLVNTIEAAERAAAAA</sequence>
<accession>Q3JQL8</accession>
<feature type="chain" id="PRO_0000268300" description="Bifunctional protein FolD">
    <location>
        <begin position="1"/>
        <end position="285"/>
    </location>
</feature>
<feature type="binding site" evidence="1">
    <location>
        <begin position="165"/>
        <end position="167"/>
    </location>
    <ligand>
        <name>NADP(+)</name>
        <dbReference type="ChEBI" id="CHEBI:58349"/>
    </ligand>
</feature>
<feature type="binding site" evidence="1">
    <location>
        <position position="190"/>
    </location>
    <ligand>
        <name>NADP(+)</name>
        <dbReference type="ChEBI" id="CHEBI:58349"/>
    </ligand>
</feature>
<organism>
    <name type="scientific">Burkholderia pseudomallei (strain 1710b)</name>
    <dbReference type="NCBI Taxonomy" id="320372"/>
    <lineage>
        <taxon>Bacteria</taxon>
        <taxon>Pseudomonadati</taxon>
        <taxon>Pseudomonadota</taxon>
        <taxon>Betaproteobacteria</taxon>
        <taxon>Burkholderiales</taxon>
        <taxon>Burkholderiaceae</taxon>
        <taxon>Burkholderia</taxon>
        <taxon>pseudomallei group</taxon>
    </lineage>
</organism>
<evidence type="ECO:0000255" key="1">
    <source>
        <dbReference type="HAMAP-Rule" id="MF_01576"/>
    </source>
</evidence>
<evidence type="ECO:0000305" key="2"/>
<reference key="1">
    <citation type="journal article" date="2010" name="Genome Biol. Evol.">
        <title>Continuing evolution of Burkholderia mallei through genome reduction and large-scale rearrangements.</title>
        <authorList>
            <person name="Losada L."/>
            <person name="Ronning C.M."/>
            <person name="DeShazer D."/>
            <person name="Woods D."/>
            <person name="Fedorova N."/>
            <person name="Kim H.S."/>
            <person name="Shabalina S.A."/>
            <person name="Pearson T.R."/>
            <person name="Brinkac L."/>
            <person name="Tan P."/>
            <person name="Nandi T."/>
            <person name="Crabtree J."/>
            <person name="Badger J."/>
            <person name="Beckstrom-Sternberg S."/>
            <person name="Saqib M."/>
            <person name="Schutzer S.E."/>
            <person name="Keim P."/>
            <person name="Nierman W.C."/>
        </authorList>
    </citation>
    <scope>NUCLEOTIDE SEQUENCE [LARGE SCALE GENOMIC DNA]</scope>
    <source>
        <strain>1710b</strain>
    </source>
</reference>
<comment type="function">
    <text evidence="1">Catalyzes the oxidation of 5,10-methylenetetrahydrofolate to 5,10-methenyltetrahydrofolate and then the hydrolysis of 5,10-methenyltetrahydrofolate to 10-formyltetrahydrofolate.</text>
</comment>
<comment type="catalytic activity">
    <reaction evidence="1">
        <text>(6R)-5,10-methylene-5,6,7,8-tetrahydrofolate + NADP(+) = (6R)-5,10-methenyltetrahydrofolate + NADPH</text>
        <dbReference type="Rhea" id="RHEA:22812"/>
        <dbReference type="ChEBI" id="CHEBI:15636"/>
        <dbReference type="ChEBI" id="CHEBI:57455"/>
        <dbReference type="ChEBI" id="CHEBI:57783"/>
        <dbReference type="ChEBI" id="CHEBI:58349"/>
        <dbReference type="EC" id="1.5.1.5"/>
    </reaction>
</comment>
<comment type="catalytic activity">
    <reaction evidence="1">
        <text>(6R)-5,10-methenyltetrahydrofolate + H2O = (6R)-10-formyltetrahydrofolate + H(+)</text>
        <dbReference type="Rhea" id="RHEA:23700"/>
        <dbReference type="ChEBI" id="CHEBI:15377"/>
        <dbReference type="ChEBI" id="CHEBI:15378"/>
        <dbReference type="ChEBI" id="CHEBI:57455"/>
        <dbReference type="ChEBI" id="CHEBI:195366"/>
        <dbReference type="EC" id="3.5.4.9"/>
    </reaction>
</comment>
<comment type="pathway">
    <text evidence="1">One-carbon metabolism; tetrahydrofolate interconversion.</text>
</comment>
<comment type="subunit">
    <text evidence="1">Homodimer.</text>
</comment>
<comment type="similarity">
    <text evidence="1">Belongs to the tetrahydrofolate dehydrogenase/cyclohydrolase family.</text>
</comment>
<comment type="sequence caution" evidence="2">
    <conflict type="erroneous initiation">
        <sequence resource="EMBL-CDS" id="ABA49993"/>
    </conflict>
</comment>